<name>NDHN_PROM3</name>
<accession>A2CC26</accession>
<proteinExistence type="inferred from homology"/>
<sequence length="153" mass="16863">MPLLLSGRVFRRDLDACGCLAMHVPLEGGSETRLLRRLRAAGYRTQLSSARGLGDPEVFLFQLHGIRPPHLGHQSVGRNGAVGEVQQVMPQLAELFVDNVPVVLWLLEGQVLSRSELLALCDLCKRESRLRVVVEMGGARSLNWQPMSTLLGV</sequence>
<evidence type="ECO:0000255" key="1">
    <source>
        <dbReference type="HAMAP-Rule" id="MF_01353"/>
    </source>
</evidence>
<gene>
    <name evidence="1" type="primary">ndhN</name>
    <name type="ordered locus">P9303_23011</name>
</gene>
<feature type="chain" id="PRO_0000352224" description="NAD(P)H-quinone oxidoreductase subunit N">
    <location>
        <begin position="1"/>
        <end position="153"/>
    </location>
</feature>
<reference key="1">
    <citation type="journal article" date="2007" name="PLoS Genet.">
        <title>Patterns and implications of gene gain and loss in the evolution of Prochlorococcus.</title>
        <authorList>
            <person name="Kettler G.C."/>
            <person name="Martiny A.C."/>
            <person name="Huang K."/>
            <person name="Zucker J."/>
            <person name="Coleman M.L."/>
            <person name="Rodrigue S."/>
            <person name="Chen F."/>
            <person name="Lapidus A."/>
            <person name="Ferriera S."/>
            <person name="Johnson J."/>
            <person name="Steglich C."/>
            <person name="Church G.M."/>
            <person name="Richardson P."/>
            <person name="Chisholm S.W."/>
        </authorList>
    </citation>
    <scope>NUCLEOTIDE SEQUENCE [LARGE SCALE GENOMIC DNA]</scope>
    <source>
        <strain>MIT 9303</strain>
    </source>
</reference>
<comment type="function">
    <text evidence="1">NDH-1 shuttles electrons from an unknown electron donor, via FMN and iron-sulfur (Fe-S) centers, to quinones in the respiratory and/or the photosynthetic chain. The immediate electron acceptor for the enzyme in this species is believed to be plastoquinone. Couples the redox reaction to proton translocation, and thus conserves the redox energy in a proton gradient. Cyanobacterial NDH-1 also plays a role in inorganic carbon-concentration.</text>
</comment>
<comment type="catalytic activity">
    <reaction evidence="1">
        <text>a plastoquinone + NADH + (n+1) H(+)(in) = a plastoquinol + NAD(+) + n H(+)(out)</text>
        <dbReference type="Rhea" id="RHEA:42608"/>
        <dbReference type="Rhea" id="RHEA-COMP:9561"/>
        <dbReference type="Rhea" id="RHEA-COMP:9562"/>
        <dbReference type="ChEBI" id="CHEBI:15378"/>
        <dbReference type="ChEBI" id="CHEBI:17757"/>
        <dbReference type="ChEBI" id="CHEBI:57540"/>
        <dbReference type="ChEBI" id="CHEBI:57945"/>
        <dbReference type="ChEBI" id="CHEBI:62192"/>
    </reaction>
</comment>
<comment type="catalytic activity">
    <reaction evidence="1">
        <text>a plastoquinone + NADPH + (n+1) H(+)(in) = a plastoquinol + NADP(+) + n H(+)(out)</text>
        <dbReference type="Rhea" id="RHEA:42612"/>
        <dbReference type="Rhea" id="RHEA-COMP:9561"/>
        <dbReference type="Rhea" id="RHEA-COMP:9562"/>
        <dbReference type="ChEBI" id="CHEBI:15378"/>
        <dbReference type="ChEBI" id="CHEBI:17757"/>
        <dbReference type="ChEBI" id="CHEBI:57783"/>
        <dbReference type="ChEBI" id="CHEBI:58349"/>
        <dbReference type="ChEBI" id="CHEBI:62192"/>
    </reaction>
</comment>
<comment type="subunit">
    <text evidence="1">NDH-1 can be composed of about 15 different subunits; different subcomplexes with different compositions have been identified which probably have different functions.</text>
</comment>
<comment type="subcellular location">
    <subcellularLocation>
        <location evidence="1">Cellular thylakoid membrane</location>
        <topology evidence="1">Peripheral membrane protein</topology>
        <orientation evidence="1">Cytoplasmic side</orientation>
    </subcellularLocation>
</comment>
<comment type="similarity">
    <text evidence="1">Belongs to the complex I NdhN subunit family.</text>
</comment>
<keyword id="KW-0472">Membrane</keyword>
<keyword id="KW-0520">NAD</keyword>
<keyword id="KW-0521">NADP</keyword>
<keyword id="KW-0618">Plastoquinone</keyword>
<keyword id="KW-0874">Quinone</keyword>
<keyword id="KW-0793">Thylakoid</keyword>
<keyword id="KW-1278">Translocase</keyword>
<keyword id="KW-0813">Transport</keyword>
<organism>
    <name type="scientific">Prochlorococcus marinus (strain MIT 9303)</name>
    <dbReference type="NCBI Taxonomy" id="59922"/>
    <lineage>
        <taxon>Bacteria</taxon>
        <taxon>Bacillati</taxon>
        <taxon>Cyanobacteriota</taxon>
        <taxon>Cyanophyceae</taxon>
        <taxon>Synechococcales</taxon>
        <taxon>Prochlorococcaceae</taxon>
        <taxon>Prochlorococcus</taxon>
    </lineage>
</organism>
<dbReference type="EC" id="7.1.1.-" evidence="1"/>
<dbReference type="EMBL" id="CP000554">
    <property type="protein sequence ID" value="ABM79036.1"/>
    <property type="molecule type" value="Genomic_DNA"/>
</dbReference>
<dbReference type="RefSeq" id="WP_011826904.1">
    <property type="nucleotide sequence ID" value="NC_008820.1"/>
</dbReference>
<dbReference type="SMR" id="A2CC26"/>
<dbReference type="STRING" id="59922.P9303_23011"/>
<dbReference type="KEGG" id="pmf:P9303_23011"/>
<dbReference type="HOGENOM" id="CLU_087432_0_0_3"/>
<dbReference type="BioCyc" id="PMAR59922:G1G80-2018-MONOMER"/>
<dbReference type="Proteomes" id="UP000002274">
    <property type="component" value="Chromosome"/>
</dbReference>
<dbReference type="GO" id="GO:0031676">
    <property type="term" value="C:plasma membrane-derived thylakoid membrane"/>
    <property type="evidence" value="ECO:0007669"/>
    <property type="project" value="UniProtKB-SubCell"/>
</dbReference>
<dbReference type="GO" id="GO:0016655">
    <property type="term" value="F:oxidoreductase activity, acting on NAD(P)H, quinone or similar compound as acceptor"/>
    <property type="evidence" value="ECO:0007669"/>
    <property type="project" value="UniProtKB-UniRule"/>
</dbReference>
<dbReference type="GO" id="GO:0048038">
    <property type="term" value="F:quinone binding"/>
    <property type="evidence" value="ECO:0007669"/>
    <property type="project" value="UniProtKB-KW"/>
</dbReference>
<dbReference type="HAMAP" id="MF_01353">
    <property type="entry name" value="NDH1_NDH1N"/>
    <property type="match status" value="1"/>
</dbReference>
<dbReference type="InterPro" id="IPR020874">
    <property type="entry name" value="NAD(P)H-quinone_OxRdtase_su_N"/>
</dbReference>
<dbReference type="PANTHER" id="PTHR35515">
    <property type="entry name" value="NAD(P)H-QUINONE OXIDOREDUCTASE SUBUNIT N, CHLOROPLASTIC"/>
    <property type="match status" value="1"/>
</dbReference>
<dbReference type="PANTHER" id="PTHR35515:SF1">
    <property type="entry name" value="NAD(P)H-QUINONE OXIDOREDUCTASE SUBUNIT N, CHLOROPLASTIC"/>
    <property type="match status" value="1"/>
</dbReference>
<dbReference type="Pfam" id="PF11909">
    <property type="entry name" value="NdhN"/>
    <property type="match status" value="1"/>
</dbReference>
<protein>
    <recommendedName>
        <fullName evidence="1">NAD(P)H-quinone oxidoreductase subunit N</fullName>
        <ecNumber evidence="1">7.1.1.-</ecNumber>
    </recommendedName>
    <alternativeName>
        <fullName evidence="1">NAD(P)H dehydrogenase I subunit N</fullName>
        <shortName evidence="1">NDH-1 subunit N</shortName>
        <shortName evidence="1">NDH-N</shortName>
    </alternativeName>
</protein>